<proteinExistence type="inferred from homology"/>
<gene>
    <name type="primary">B2M</name>
</gene>
<comment type="function">
    <text evidence="1">Component of the class I major histocompatibility complex (MHC). Involved in the presentation of peptide antigens to the immune system (By similarity).</text>
</comment>
<comment type="subunit">
    <text evidence="1">Heterodimer of an alpha chain and a beta chain. Beta-2-microglobulin is the beta-chain of major histocompatibility complex class I molecules (By similarity).</text>
</comment>
<comment type="subcellular location">
    <subcellularLocation>
        <location evidence="1">Secreted</location>
    </subcellularLocation>
</comment>
<comment type="similarity">
    <text evidence="3">Belongs to the beta-2-microglobulin family.</text>
</comment>
<evidence type="ECO:0000250" key="1"/>
<evidence type="ECO:0000255" key="2">
    <source>
        <dbReference type="PROSITE-ProRule" id="PRU00114"/>
    </source>
</evidence>
<evidence type="ECO:0000305" key="3"/>
<organism>
    <name type="scientific">Saimiri sciureus</name>
    <name type="common">Common squirrel monkey</name>
    <dbReference type="NCBI Taxonomy" id="9521"/>
    <lineage>
        <taxon>Eukaryota</taxon>
        <taxon>Metazoa</taxon>
        <taxon>Chordata</taxon>
        <taxon>Craniata</taxon>
        <taxon>Vertebrata</taxon>
        <taxon>Euteleostomi</taxon>
        <taxon>Mammalia</taxon>
        <taxon>Eutheria</taxon>
        <taxon>Euarchontoglires</taxon>
        <taxon>Primates</taxon>
        <taxon>Haplorrhini</taxon>
        <taxon>Platyrrhini</taxon>
        <taxon>Cebidae</taxon>
        <taxon>Saimiriinae</taxon>
        <taxon>Saimiri</taxon>
    </lineage>
</organism>
<dbReference type="EMBL" id="AF068765">
    <property type="protein sequence ID" value="AAD17565.1"/>
    <property type="molecule type" value="Genomic_DNA"/>
</dbReference>
<dbReference type="EMBL" id="AF068764">
    <property type="protein sequence ID" value="AAD17565.1"/>
    <property type="status" value="JOINED"/>
    <property type="molecule type" value="Genomic_DNA"/>
</dbReference>
<dbReference type="SMR" id="Q71UN6"/>
<dbReference type="GO" id="GO:0005576">
    <property type="term" value="C:extracellular region"/>
    <property type="evidence" value="ECO:0007669"/>
    <property type="project" value="UniProtKB-SubCell"/>
</dbReference>
<dbReference type="GO" id="GO:0042612">
    <property type="term" value="C:MHC class I protein complex"/>
    <property type="evidence" value="ECO:0007669"/>
    <property type="project" value="UniProtKB-KW"/>
</dbReference>
<dbReference type="GO" id="GO:0002474">
    <property type="term" value="P:antigen processing and presentation of peptide antigen via MHC class I"/>
    <property type="evidence" value="ECO:0007669"/>
    <property type="project" value="UniProtKB-KW"/>
</dbReference>
<dbReference type="GO" id="GO:0006955">
    <property type="term" value="P:immune response"/>
    <property type="evidence" value="ECO:0007669"/>
    <property type="project" value="InterPro"/>
</dbReference>
<dbReference type="CDD" id="cd05770">
    <property type="entry name" value="IgC1_beta2m"/>
    <property type="match status" value="1"/>
</dbReference>
<dbReference type="FunFam" id="2.60.40.10:FF:001005">
    <property type="entry name" value="Beta-2-microglobulin"/>
    <property type="match status" value="1"/>
</dbReference>
<dbReference type="Gene3D" id="2.60.40.10">
    <property type="entry name" value="Immunoglobulins"/>
    <property type="match status" value="1"/>
</dbReference>
<dbReference type="InterPro" id="IPR015707">
    <property type="entry name" value="B2Microglobulin"/>
</dbReference>
<dbReference type="InterPro" id="IPR007110">
    <property type="entry name" value="Ig-like_dom"/>
</dbReference>
<dbReference type="InterPro" id="IPR036179">
    <property type="entry name" value="Ig-like_dom_sf"/>
</dbReference>
<dbReference type="InterPro" id="IPR013783">
    <property type="entry name" value="Ig-like_fold"/>
</dbReference>
<dbReference type="InterPro" id="IPR003006">
    <property type="entry name" value="Ig/MHC_CS"/>
</dbReference>
<dbReference type="InterPro" id="IPR003597">
    <property type="entry name" value="Ig_C1-set"/>
</dbReference>
<dbReference type="InterPro" id="IPR050160">
    <property type="entry name" value="MHC/Immunoglobulin"/>
</dbReference>
<dbReference type="PANTHER" id="PTHR19944:SF62">
    <property type="entry name" value="BETA-2-MICROGLOBULIN"/>
    <property type="match status" value="1"/>
</dbReference>
<dbReference type="PANTHER" id="PTHR19944">
    <property type="entry name" value="MHC CLASS II-RELATED"/>
    <property type="match status" value="1"/>
</dbReference>
<dbReference type="Pfam" id="PF07654">
    <property type="entry name" value="C1-set"/>
    <property type="match status" value="1"/>
</dbReference>
<dbReference type="SMART" id="SM00407">
    <property type="entry name" value="IGc1"/>
    <property type="match status" value="1"/>
</dbReference>
<dbReference type="SUPFAM" id="SSF48726">
    <property type="entry name" value="Immunoglobulin"/>
    <property type="match status" value="1"/>
</dbReference>
<dbReference type="PROSITE" id="PS50835">
    <property type="entry name" value="IG_LIKE"/>
    <property type="match status" value="1"/>
</dbReference>
<dbReference type="PROSITE" id="PS00290">
    <property type="entry name" value="IG_MHC"/>
    <property type="match status" value="1"/>
</dbReference>
<accession>Q71UN6</accession>
<sequence length="119" mass="13650">MARSVVAALLVLLSLSGLEAIQHAPKIQVYSRHPAENGKPNYLNCYVSGFHPSDIEVDLLKNGQKIENVEHSDLSFSKDWSFYLLYYTEFTPNEKDEYACRVSHVTFPTPKTVKWDRNM</sequence>
<keyword id="KW-1015">Disulfide bond</keyword>
<keyword id="KW-0391">Immunity</keyword>
<keyword id="KW-0393">Immunoglobulin domain</keyword>
<keyword id="KW-0490">MHC I</keyword>
<keyword id="KW-0964">Secreted</keyword>
<keyword id="KW-0732">Signal</keyword>
<protein>
    <recommendedName>
        <fullName>Beta-2-microglobulin</fullName>
    </recommendedName>
</protein>
<feature type="signal peptide" evidence="1">
    <location>
        <begin position="1"/>
        <end position="20"/>
    </location>
</feature>
<feature type="chain" id="PRO_0000018800" description="Beta-2-microglobulin">
    <location>
        <begin position="21"/>
        <end position="119"/>
    </location>
</feature>
<feature type="domain" description="Ig-like C1-type">
    <location>
        <begin position="25"/>
        <end position="114"/>
    </location>
</feature>
<feature type="disulfide bond" evidence="2">
    <location>
        <begin position="45"/>
        <end position="100"/>
    </location>
</feature>
<name>B2MG_SAISC</name>
<reference key="1">
    <citation type="journal article" date="1999" name="Mol. Phylogenet. Evol.">
        <title>Molecular phylogeny of new world primates (Platyrrhini) based on beta2-microglobulin DNA sequences.</title>
        <authorList>
            <person name="Canavez F.C."/>
            <person name="Moreira M.A."/>
            <person name="Ladasky J.J."/>
            <person name="Pissinatti A."/>
            <person name="Parham P."/>
            <person name="Seuanez H.N."/>
        </authorList>
    </citation>
    <scope>NUCLEOTIDE SEQUENCE [GENOMIC DNA]</scope>
</reference>